<evidence type="ECO:0000255" key="1">
    <source>
        <dbReference type="HAMAP-Rule" id="MF_01523"/>
    </source>
</evidence>
<protein>
    <recommendedName>
        <fullName evidence="1">Ribosomal RNA small subunit methyltransferase J</fullName>
        <ecNumber evidence="1">2.1.1.242</ecNumber>
    </recommendedName>
    <alternativeName>
        <fullName evidence="1">16S rRNA m2G1516 methyltransferase</fullName>
    </alternativeName>
    <alternativeName>
        <fullName evidence="1">rRNA (guanine-N(2)-)-methyltransferase</fullName>
    </alternativeName>
</protein>
<organism>
    <name type="scientific">Haemophilus influenzae (strain PittGG)</name>
    <dbReference type="NCBI Taxonomy" id="374931"/>
    <lineage>
        <taxon>Bacteria</taxon>
        <taxon>Pseudomonadati</taxon>
        <taxon>Pseudomonadota</taxon>
        <taxon>Gammaproteobacteria</taxon>
        <taxon>Pasteurellales</taxon>
        <taxon>Pasteurellaceae</taxon>
        <taxon>Haemophilus</taxon>
    </lineage>
</organism>
<gene>
    <name evidence="1" type="primary">rsmJ</name>
    <name type="ordered locus">CGSHiGG_07755</name>
</gene>
<dbReference type="EC" id="2.1.1.242" evidence="1"/>
<dbReference type="EMBL" id="CP000672">
    <property type="protein sequence ID" value="ABR00402.1"/>
    <property type="molecule type" value="Genomic_DNA"/>
</dbReference>
<dbReference type="SMR" id="A5UHZ6"/>
<dbReference type="KEGG" id="hiq:CGSHiGG_07755"/>
<dbReference type="HOGENOM" id="CLU_076324_0_0_6"/>
<dbReference type="Proteomes" id="UP000001990">
    <property type="component" value="Chromosome"/>
</dbReference>
<dbReference type="GO" id="GO:0005737">
    <property type="term" value="C:cytoplasm"/>
    <property type="evidence" value="ECO:0007669"/>
    <property type="project" value="UniProtKB-SubCell"/>
</dbReference>
<dbReference type="GO" id="GO:0008990">
    <property type="term" value="F:rRNA (guanine-N2-)-methyltransferase activity"/>
    <property type="evidence" value="ECO:0007669"/>
    <property type="project" value="UniProtKB-UniRule"/>
</dbReference>
<dbReference type="Gene3D" id="3.40.50.150">
    <property type="entry name" value="Vaccinia Virus protein VP39"/>
    <property type="match status" value="1"/>
</dbReference>
<dbReference type="Gene3D" id="3.40.1630.10">
    <property type="entry name" value="YhiQ-like domain"/>
    <property type="match status" value="1"/>
</dbReference>
<dbReference type="HAMAP" id="MF_01523">
    <property type="entry name" value="16SrRNA_methyltr_J"/>
    <property type="match status" value="1"/>
</dbReference>
<dbReference type="InterPro" id="IPR007536">
    <property type="entry name" value="16SrRNA_methylTrfase_J"/>
</dbReference>
<dbReference type="InterPro" id="IPR029063">
    <property type="entry name" value="SAM-dependent_MTases_sf"/>
</dbReference>
<dbReference type="PANTHER" id="PTHR36112">
    <property type="entry name" value="RIBOSOMAL RNA SMALL SUBUNIT METHYLTRANSFERASE J"/>
    <property type="match status" value="1"/>
</dbReference>
<dbReference type="PANTHER" id="PTHR36112:SF1">
    <property type="entry name" value="RIBOSOMAL RNA SMALL SUBUNIT METHYLTRANSFERASE J"/>
    <property type="match status" value="1"/>
</dbReference>
<dbReference type="Pfam" id="PF04445">
    <property type="entry name" value="SAM_MT"/>
    <property type="match status" value="1"/>
</dbReference>
<dbReference type="SUPFAM" id="SSF53335">
    <property type="entry name" value="S-adenosyl-L-methionine-dependent methyltransferases"/>
    <property type="match status" value="1"/>
</dbReference>
<name>RSMJ_HAEIG</name>
<keyword id="KW-0963">Cytoplasm</keyword>
<keyword id="KW-0489">Methyltransferase</keyword>
<keyword id="KW-0698">rRNA processing</keyword>
<keyword id="KW-0949">S-adenosyl-L-methionine</keyword>
<keyword id="KW-0808">Transferase</keyword>
<reference key="1">
    <citation type="journal article" date="2007" name="Genome Biol.">
        <title>Characterization and modeling of the Haemophilus influenzae core and supragenomes based on the complete genomic sequences of Rd and 12 clinical nontypeable strains.</title>
        <authorList>
            <person name="Hogg J.S."/>
            <person name="Hu F.Z."/>
            <person name="Janto B."/>
            <person name="Boissy R."/>
            <person name="Hayes J."/>
            <person name="Keefe R."/>
            <person name="Post J.C."/>
            <person name="Ehrlich G.D."/>
        </authorList>
    </citation>
    <scope>NUCLEOTIDE SEQUENCE [LARGE SCALE GENOMIC DNA]</scope>
    <source>
        <strain>PittGG</strain>
    </source>
</reference>
<sequence length="257" mass="28719">MAHSQVGIQLISESTEKTLAELTALCAEYNIIHNEKSPLALVQTDERLELRKLDEPKLRAVYVDFIGGTMAHRRKFGGGRGEAVAKAVGIKGSALPTVIDATAGLGRDAFVLAAIGCQVRLVERHPVVFLLLQDGLNRAYQDEEIGEILQQNLRLLNVHHINELDPNSDYADVVYLDPMYPHKQKSALVKKEMRVFQHLVGADLDADELLLPALQLAKKRVVVKRPDYAEFLCGKQPHFSRETKNHRFDIYMGASQC</sequence>
<accession>A5UHZ6</accession>
<comment type="function">
    <text evidence="1">Specifically methylates the guanosine in position 1516 of 16S rRNA.</text>
</comment>
<comment type="catalytic activity">
    <reaction evidence="1">
        <text>guanosine(1516) in 16S rRNA + S-adenosyl-L-methionine = N(2)-methylguanosine(1516) in 16S rRNA + S-adenosyl-L-homocysteine + H(+)</text>
        <dbReference type="Rhea" id="RHEA:43220"/>
        <dbReference type="Rhea" id="RHEA-COMP:10412"/>
        <dbReference type="Rhea" id="RHEA-COMP:10413"/>
        <dbReference type="ChEBI" id="CHEBI:15378"/>
        <dbReference type="ChEBI" id="CHEBI:57856"/>
        <dbReference type="ChEBI" id="CHEBI:59789"/>
        <dbReference type="ChEBI" id="CHEBI:74269"/>
        <dbReference type="ChEBI" id="CHEBI:74481"/>
        <dbReference type="EC" id="2.1.1.242"/>
    </reaction>
</comment>
<comment type="subcellular location">
    <subcellularLocation>
        <location evidence="1">Cytoplasm</location>
    </subcellularLocation>
</comment>
<comment type="similarity">
    <text evidence="1">Belongs to the methyltransferase superfamily. RsmJ family.</text>
</comment>
<proteinExistence type="inferred from homology"/>
<feature type="chain" id="PRO_0000316256" description="Ribosomal RNA small subunit methyltransferase J">
    <location>
        <begin position="1"/>
        <end position="257"/>
    </location>
</feature>
<feature type="binding site" evidence="1">
    <location>
        <begin position="107"/>
        <end position="108"/>
    </location>
    <ligand>
        <name>S-adenosyl-L-methionine</name>
        <dbReference type="ChEBI" id="CHEBI:59789"/>
    </ligand>
</feature>
<feature type="binding site" evidence="1">
    <location>
        <begin position="123"/>
        <end position="124"/>
    </location>
    <ligand>
        <name>S-adenosyl-L-methionine</name>
        <dbReference type="ChEBI" id="CHEBI:59789"/>
    </ligand>
</feature>
<feature type="binding site" evidence="1">
    <location>
        <position position="177"/>
    </location>
    <ligand>
        <name>S-adenosyl-L-methionine</name>
        <dbReference type="ChEBI" id="CHEBI:59789"/>
    </ligand>
</feature>